<name>NAGB_BACC0</name>
<feature type="chain" id="PRO_1000139754" description="Glucosamine-6-phosphate deaminase">
    <location>
        <begin position="1"/>
        <end position="262"/>
    </location>
</feature>
<feature type="active site" description="Proton acceptor; for enolization step" evidence="1">
    <location>
        <position position="63"/>
    </location>
</feature>
<feature type="active site" description="For ring-opening step" evidence="1">
    <location>
        <position position="129"/>
    </location>
</feature>
<feature type="active site" description="Proton acceptor; for ring-opening step" evidence="1">
    <location>
        <position position="131"/>
    </location>
</feature>
<feature type="active site" description="For ring-opening step" evidence="1">
    <location>
        <position position="136"/>
    </location>
</feature>
<evidence type="ECO:0000255" key="1">
    <source>
        <dbReference type="HAMAP-Rule" id="MF_01241"/>
    </source>
</evidence>
<sequence length="262" mass="28971">MNILVVKTPEELAEAGYKLIEEVVKTKENPTLGMATGSSPLGIYAEMRKNKLDTSRVTTVNLDEYVNLPHEDKNSYHYFMQEQLFDHLPFKQTYVPNGMASDLEEECKRYEGILAANPVDLQILGIGENGHIGFNEPGTPFNSPTNIVELTESTRQANLRFFEKEEDVPTHAITMGIGSIMKAKQILLVAMGSKKAEAVKELLQGAYSEACPATVLQRHPNVTVIADQEALSLCSEAIADEHRQVFTISDLLSDSRVGETAN</sequence>
<keyword id="KW-0119">Carbohydrate metabolism</keyword>
<keyword id="KW-0378">Hydrolase</keyword>
<accession>B7JL33</accession>
<protein>
    <recommendedName>
        <fullName evidence="1">Glucosamine-6-phosphate deaminase</fullName>
        <ecNumber evidence="1">3.5.99.6</ecNumber>
    </recommendedName>
    <alternativeName>
        <fullName evidence="1">GlcN6P deaminase</fullName>
        <shortName evidence="1">GNPDA</shortName>
    </alternativeName>
    <alternativeName>
        <fullName evidence="1">Glucosamine-6-phosphate isomerase</fullName>
    </alternativeName>
</protein>
<gene>
    <name evidence="1" type="primary">nagB</name>
    <name type="ordered locus">BCAH820_4074</name>
</gene>
<reference key="1">
    <citation type="submission" date="2008-10" db="EMBL/GenBank/DDBJ databases">
        <title>Genome sequence of Bacillus cereus AH820.</title>
        <authorList>
            <person name="Dodson R.J."/>
            <person name="Durkin A.S."/>
            <person name="Rosovitz M.J."/>
            <person name="Rasko D.A."/>
            <person name="Hoffmaster A."/>
            <person name="Ravel J."/>
            <person name="Sutton G."/>
        </authorList>
    </citation>
    <scope>NUCLEOTIDE SEQUENCE [LARGE SCALE GENOMIC DNA]</scope>
    <source>
        <strain>AH820</strain>
    </source>
</reference>
<comment type="function">
    <text evidence="1">Catalyzes the reversible isomerization-deamination of glucosamine 6-phosphate (GlcN6P) to form fructose 6-phosphate (Fru6P) and ammonium ion.</text>
</comment>
<comment type="catalytic activity">
    <reaction evidence="1">
        <text>alpha-D-glucosamine 6-phosphate + H2O = beta-D-fructose 6-phosphate + NH4(+)</text>
        <dbReference type="Rhea" id="RHEA:12172"/>
        <dbReference type="ChEBI" id="CHEBI:15377"/>
        <dbReference type="ChEBI" id="CHEBI:28938"/>
        <dbReference type="ChEBI" id="CHEBI:57634"/>
        <dbReference type="ChEBI" id="CHEBI:75989"/>
        <dbReference type="EC" id="3.5.99.6"/>
    </reaction>
</comment>
<comment type="pathway">
    <text evidence="1">Amino-sugar metabolism; N-acetylneuraminate degradation; D-fructose 6-phosphate from N-acetylneuraminate: step 5/5.</text>
</comment>
<comment type="similarity">
    <text evidence="1">Belongs to the glucosamine/galactosamine-6-phosphate isomerase family. NagB subfamily.</text>
</comment>
<proteinExistence type="inferred from homology"/>
<dbReference type="EC" id="3.5.99.6" evidence="1"/>
<dbReference type="EMBL" id="CP001283">
    <property type="protein sequence ID" value="ACK92431.1"/>
    <property type="molecule type" value="Genomic_DNA"/>
</dbReference>
<dbReference type="RefSeq" id="WP_001024206.1">
    <property type="nucleotide sequence ID" value="NC_011773.1"/>
</dbReference>
<dbReference type="SMR" id="B7JL33"/>
<dbReference type="GeneID" id="75087199"/>
<dbReference type="KEGG" id="bcu:BCAH820_4074"/>
<dbReference type="HOGENOM" id="CLU_049611_1_0_9"/>
<dbReference type="UniPathway" id="UPA00629">
    <property type="reaction ID" value="UER00684"/>
</dbReference>
<dbReference type="Proteomes" id="UP000001363">
    <property type="component" value="Chromosome"/>
</dbReference>
<dbReference type="GO" id="GO:0005737">
    <property type="term" value="C:cytoplasm"/>
    <property type="evidence" value="ECO:0007669"/>
    <property type="project" value="TreeGrafter"/>
</dbReference>
<dbReference type="GO" id="GO:0004342">
    <property type="term" value="F:glucosamine-6-phosphate deaminase activity"/>
    <property type="evidence" value="ECO:0007669"/>
    <property type="project" value="UniProtKB-UniRule"/>
</dbReference>
<dbReference type="GO" id="GO:0042802">
    <property type="term" value="F:identical protein binding"/>
    <property type="evidence" value="ECO:0007669"/>
    <property type="project" value="TreeGrafter"/>
</dbReference>
<dbReference type="GO" id="GO:0005975">
    <property type="term" value="P:carbohydrate metabolic process"/>
    <property type="evidence" value="ECO:0007669"/>
    <property type="project" value="InterPro"/>
</dbReference>
<dbReference type="GO" id="GO:0006043">
    <property type="term" value="P:glucosamine catabolic process"/>
    <property type="evidence" value="ECO:0007669"/>
    <property type="project" value="TreeGrafter"/>
</dbReference>
<dbReference type="GO" id="GO:0006046">
    <property type="term" value="P:N-acetylglucosamine catabolic process"/>
    <property type="evidence" value="ECO:0007669"/>
    <property type="project" value="TreeGrafter"/>
</dbReference>
<dbReference type="GO" id="GO:0019262">
    <property type="term" value="P:N-acetylneuraminate catabolic process"/>
    <property type="evidence" value="ECO:0007669"/>
    <property type="project" value="UniProtKB-UniRule"/>
</dbReference>
<dbReference type="CDD" id="cd01399">
    <property type="entry name" value="GlcN6P_deaminase"/>
    <property type="match status" value="1"/>
</dbReference>
<dbReference type="FunFam" id="3.40.50.1360:FF:000003">
    <property type="entry name" value="Glucosamine-6-phosphate deaminase"/>
    <property type="match status" value="1"/>
</dbReference>
<dbReference type="Gene3D" id="3.40.50.1360">
    <property type="match status" value="1"/>
</dbReference>
<dbReference type="HAMAP" id="MF_01241">
    <property type="entry name" value="GlcN6P_deamin"/>
    <property type="match status" value="1"/>
</dbReference>
<dbReference type="InterPro" id="IPR006148">
    <property type="entry name" value="Glc/Gal-6P_isomerase"/>
</dbReference>
<dbReference type="InterPro" id="IPR004547">
    <property type="entry name" value="Glucosamine6P_isomerase"/>
</dbReference>
<dbReference type="InterPro" id="IPR018321">
    <property type="entry name" value="Glucosamine6P_isomerase_CS"/>
</dbReference>
<dbReference type="InterPro" id="IPR037171">
    <property type="entry name" value="NagB/RpiA_transferase-like"/>
</dbReference>
<dbReference type="NCBIfam" id="TIGR00502">
    <property type="entry name" value="nagB"/>
    <property type="match status" value="1"/>
</dbReference>
<dbReference type="NCBIfam" id="NF001682">
    <property type="entry name" value="PRK00443.1-1"/>
    <property type="match status" value="1"/>
</dbReference>
<dbReference type="PANTHER" id="PTHR11280">
    <property type="entry name" value="GLUCOSAMINE-6-PHOSPHATE ISOMERASE"/>
    <property type="match status" value="1"/>
</dbReference>
<dbReference type="PANTHER" id="PTHR11280:SF5">
    <property type="entry name" value="GLUCOSAMINE-6-PHOSPHATE ISOMERASE"/>
    <property type="match status" value="1"/>
</dbReference>
<dbReference type="Pfam" id="PF01182">
    <property type="entry name" value="Glucosamine_iso"/>
    <property type="match status" value="1"/>
</dbReference>
<dbReference type="SUPFAM" id="SSF100950">
    <property type="entry name" value="NagB/RpiA/CoA transferase-like"/>
    <property type="match status" value="1"/>
</dbReference>
<dbReference type="PROSITE" id="PS01161">
    <property type="entry name" value="GLC_GALNAC_ISOMERASE"/>
    <property type="match status" value="1"/>
</dbReference>
<organism>
    <name type="scientific">Bacillus cereus (strain AH820)</name>
    <dbReference type="NCBI Taxonomy" id="405535"/>
    <lineage>
        <taxon>Bacteria</taxon>
        <taxon>Bacillati</taxon>
        <taxon>Bacillota</taxon>
        <taxon>Bacilli</taxon>
        <taxon>Bacillales</taxon>
        <taxon>Bacillaceae</taxon>
        <taxon>Bacillus</taxon>
        <taxon>Bacillus cereus group</taxon>
    </lineage>
</organism>